<sequence>MATKIKFKYKGQDLEVDISKVKKVWKVGKMVSFTYDDNGKTGRGAVSEKDAPKELLSMIGKK</sequence>
<name>DN7_METCR</name>
<evidence type="ECO:0000250" key="1">
    <source>
        <dbReference type="UniProtKB" id="P61990"/>
    </source>
</evidence>
<evidence type="ECO:0000269" key="2">
    <source>
    </source>
</evidence>
<evidence type="ECO:0000303" key="3">
    <source>
    </source>
</evidence>
<evidence type="ECO:0000305" key="4"/>
<evidence type="ECO:0000312" key="5">
    <source>
        <dbReference type="EMBL" id="AEB95556.1"/>
    </source>
</evidence>
<accession>F4FYY6</accession>
<gene>
    <name evidence="5" type="ordered locus">Mcup_1453</name>
</gene>
<protein>
    <recommendedName>
        <fullName evidence="4">DNA-binding protein 7</fullName>
    </recommendedName>
    <alternativeName>
        <fullName evidence="4">7 kDa DNA-binding protein</fullName>
    </alternativeName>
    <alternativeName>
        <fullName evidence="3">Mcu7</fullName>
    </alternativeName>
</protein>
<organism>
    <name type="scientific">Metallosphaera cuprina (strain Ar-4)</name>
    <dbReference type="NCBI Taxonomy" id="1006006"/>
    <lineage>
        <taxon>Archaea</taxon>
        <taxon>Thermoproteota</taxon>
        <taxon>Thermoprotei</taxon>
        <taxon>Sulfolobales</taxon>
        <taxon>Sulfolobaceae</taxon>
        <taxon>Metallosphaera</taxon>
    </lineage>
</organism>
<comment type="function">
    <text evidence="1">Can constrain negative DNA supercoils. May be involved in maintaining the integrity of the genome at high temperature.</text>
</comment>
<comment type="biophysicochemical properties">
    <phDependence>
        <text evidence="2">Highly stable from pH 0 to pH 12.</text>
    </phDependence>
    <temperatureDependence>
        <text evidence="2">Hyperthermostable.</text>
    </temperatureDependence>
</comment>
<comment type="subunit">
    <text evidence="2">Monomer.</text>
</comment>
<comment type="subcellular location">
    <subcellularLocation>
        <location evidence="2">Cytoplasm</location>
    </subcellularLocation>
</comment>
<comment type="similarity">
    <text evidence="4">Belongs to the 7 kDa DNA-binding/endoribonuclease P2 family.</text>
</comment>
<keyword id="KW-0963">Cytoplasm</keyword>
<keyword id="KW-0238">DNA-binding</keyword>
<feature type="chain" id="PRO_0000439048" description="DNA-binding protein 7">
    <location>
        <begin position="1"/>
        <end position="62"/>
    </location>
</feature>
<dbReference type="EMBL" id="CP002656">
    <property type="protein sequence ID" value="AEB95556.1"/>
    <property type="molecule type" value="Genomic_DNA"/>
</dbReference>
<dbReference type="SMR" id="F4FYY6"/>
<dbReference type="GeneID" id="10493642"/>
<dbReference type="KEGG" id="mcn:Mcup_1453"/>
<dbReference type="PATRIC" id="fig|1006006.8.peg.1448"/>
<dbReference type="eggNOG" id="arCOG05888">
    <property type="taxonomic scope" value="Archaea"/>
</dbReference>
<dbReference type="HOGENOM" id="CLU_2929990_0_0_2"/>
<dbReference type="OrthoDB" id="33867at2157"/>
<dbReference type="Proteomes" id="UP000007812">
    <property type="component" value="Chromosome"/>
</dbReference>
<dbReference type="GO" id="GO:0005737">
    <property type="term" value="C:cytoplasm"/>
    <property type="evidence" value="ECO:0007669"/>
    <property type="project" value="UniProtKB-SubCell"/>
</dbReference>
<dbReference type="GO" id="GO:0003677">
    <property type="term" value="F:DNA binding"/>
    <property type="evidence" value="ECO:0007669"/>
    <property type="project" value="UniProtKB-KW"/>
</dbReference>
<dbReference type="GO" id="GO:0004521">
    <property type="term" value="F:RNA endonuclease activity"/>
    <property type="evidence" value="ECO:0007669"/>
    <property type="project" value="InterPro"/>
</dbReference>
<dbReference type="Gene3D" id="2.40.50.40">
    <property type="match status" value="1"/>
</dbReference>
<dbReference type="InterPro" id="IPR016197">
    <property type="entry name" value="Chromo-like_dom_sf"/>
</dbReference>
<dbReference type="InterPro" id="IPR003212">
    <property type="entry name" value="DNA-bd_7a-e_arc"/>
</dbReference>
<dbReference type="NCBIfam" id="NF045555">
    <property type="entry name" value="Sul7d"/>
    <property type="match status" value="1"/>
</dbReference>
<dbReference type="Pfam" id="PF02294">
    <property type="entry name" value="7kD_DNA_binding"/>
    <property type="match status" value="1"/>
</dbReference>
<dbReference type="SUPFAM" id="SSF54160">
    <property type="entry name" value="Chromo domain-like"/>
    <property type="match status" value="1"/>
</dbReference>
<proteinExistence type="evidence at protein level"/>
<reference key="1">
    <citation type="journal article" date="2011" name="J. Bacteriol.">
        <title>Complete genome sequence of Metallosphaera cuprina, a metal sulfide-oxidizing archaeon from a hot spring.</title>
        <authorList>
            <person name="Liu L.J."/>
            <person name="You X.Y."/>
            <person name="Zheng H."/>
            <person name="Wang S."/>
            <person name="Jiang C.Y."/>
            <person name="Liu S.J."/>
        </authorList>
    </citation>
    <scope>NUCLEOTIDE SEQUENCE [LARGE SCALE GENOMIC DNA]</scope>
    <source>
        <strain>Ar-4</strain>
    </source>
</reference>
<reference key="2">
    <citation type="journal article" date="2016" name="Sci. Rep.">
        <title>The archaeal '7 kDa DNA-binding' proteins: extended characterization of an old gifted family.</title>
        <authorList>
            <person name="Kalichuk V."/>
            <person name="Behar G."/>
            <person name="Renodon-Corniere A."/>
            <person name="Danovski G."/>
            <person name="Obal G."/>
            <person name="Barbet J."/>
            <person name="Mouratou B."/>
            <person name="Pecorari F."/>
        </authorList>
    </citation>
    <scope>DNA-BINDING</scope>
    <scope>BIOPHYSICOCHEMICAL PROPERTIES</scope>
    <scope>SUBUNIT</scope>
    <scope>SUBCELLULAR LOCATION</scope>
    <scope>NOMENCLATURE</scope>
</reference>